<accession>Q7WRF1</accession>
<keyword id="KW-0963">Cytoplasm</keyword>
<keyword id="KW-0274">FAD</keyword>
<keyword id="KW-0285">Flavoprotein</keyword>
<keyword id="KW-0520">NAD</keyword>
<keyword id="KW-0819">tRNA processing</keyword>
<feature type="chain" id="PRO_0000117063" description="tRNA uridine 5-carboxymethylaminomethyl modification enzyme MnmG">
    <location>
        <begin position="1"/>
        <end position="639"/>
    </location>
</feature>
<feature type="binding site" evidence="1">
    <location>
        <begin position="13"/>
        <end position="18"/>
    </location>
    <ligand>
        <name>FAD</name>
        <dbReference type="ChEBI" id="CHEBI:57692"/>
    </ligand>
</feature>
<feature type="binding site" evidence="1">
    <location>
        <begin position="274"/>
        <end position="288"/>
    </location>
    <ligand>
        <name>NAD(+)</name>
        <dbReference type="ChEBI" id="CHEBI:57540"/>
    </ligand>
</feature>
<sequence length="639" mass="70104">MDFPREFDVIVVGGGHAGTEAALAAARAGAQTLLLTHNIETLGQMSCNPSIGGIGKGHLVKEVDALGGAMAIATDEAGIQFRILNSSKGPAVRATRAQADRVLYRNAIRARLENQPNLWLFQQAVDDLMVQGDQVVGAVTQIGLRFRARTVVLTAGTFLNGLIHVGLQNYSGGRAGDPPANSLGQRLKELQLPQGRLKTGTPPRIDGRSINYSVLEEQPGDLDPVPVFSFLGKASMHPRQLPCWITHTNARTHEIIRGGLDRSPMYSGVIEGVGPRYCPSIEDKIHRFADKASHQVFLEPEGLNTHEIYPNGVSTSLPFDVQYELIHSLPGLENAHILRPGYAIEYDYFDPRALKSTLETKAISGLFFAGQINGTTGYEEAAAQGLLAGANAALQAQGKEPWVPRRDEAYLGVLVDDLVTRGVTEPYRMFTSRAEYRLSLREDNADLRLTEIGRRLGLVDDVRWDAFSRKRDAVAQEVERLKSTWVNPRVLPAHAAEALLGKAIEREYSLSDLLKRPNVSYEALMQARTDEGELLAGPGVLEDDVLAEQVETQVKYAGYIARQQDEVQKHLSHEQQPIPADIDYDAVTSLSFEVRQKLKTHRPETIGQAARVSGVTPAAISLLLIHLKRLHYGSRKQAA</sequence>
<dbReference type="EMBL" id="BX640437">
    <property type="protein sequence ID" value="CAE30503.1"/>
    <property type="molecule type" value="Genomic_DNA"/>
</dbReference>
<dbReference type="RefSeq" id="WP_003806877.1">
    <property type="nucleotide sequence ID" value="NC_002927.3"/>
</dbReference>
<dbReference type="SMR" id="Q7WRF1"/>
<dbReference type="GeneID" id="56481320"/>
<dbReference type="KEGG" id="bbr:BB0001"/>
<dbReference type="eggNOG" id="COG0445">
    <property type="taxonomic scope" value="Bacteria"/>
</dbReference>
<dbReference type="HOGENOM" id="CLU_007831_2_2_4"/>
<dbReference type="Proteomes" id="UP000001027">
    <property type="component" value="Chromosome"/>
</dbReference>
<dbReference type="GO" id="GO:0005829">
    <property type="term" value="C:cytosol"/>
    <property type="evidence" value="ECO:0007669"/>
    <property type="project" value="TreeGrafter"/>
</dbReference>
<dbReference type="GO" id="GO:0050660">
    <property type="term" value="F:flavin adenine dinucleotide binding"/>
    <property type="evidence" value="ECO:0007669"/>
    <property type="project" value="UniProtKB-UniRule"/>
</dbReference>
<dbReference type="GO" id="GO:0030488">
    <property type="term" value="P:tRNA methylation"/>
    <property type="evidence" value="ECO:0007669"/>
    <property type="project" value="TreeGrafter"/>
</dbReference>
<dbReference type="GO" id="GO:0002098">
    <property type="term" value="P:tRNA wobble uridine modification"/>
    <property type="evidence" value="ECO:0007669"/>
    <property type="project" value="InterPro"/>
</dbReference>
<dbReference type="FunFam" id="1.10.10.1800:FF:000001">
    <property type="entry name" value="tRNA uridine 5-carboxymethylaminomethyl modification enzyme MnmG"/>
    <property type="match status" value="1"/>
</dbReference>
<dbReference type="FunFam" id="1.10.150.570:FF:000001">
    <property type="entry name" value="tRNA uridine 5-carboxymethylaminomethyl modification enzyme MnmG"/>
    <property type="match status" value="1"/>
</dbReference>
<dbReference type="FunFam" id="3.50.50.60:FF:000002">
    <property type="entry name" value="tRNA uridine 5-carboxymethylaminomethyl modification enzyme MnmG"/>
    <property type="match status" value="1"/>
</dbReference>
<dbReference type="FunFam" id="3.50.50.60:FF:000010">
    <property type="entry name" value="tRNA uridine 5-carboxymethylaminomethyl modification enzyme MnmG"/>
    <property type="match status" value="1"/>
</dbReference>
<dbReference type="Gene3D" id="3.50.50.60">
    <property type="entry name" value="FAD/NAD(P)-binding domain"/>
    <property type="match status" value="2"/>
</dbReference>
<dbReference type="Gene3D" id="1.10.150.570">
    <property type="entry name" value="GidA associated domain, C-terminal subdomain"/>
    <property type="match status" value="1"/>
</dbReference>
<dbReference type="Gene3D" id="1.10.10.1800">
    <property type="entry name" value="tRNA uridine 5-carboxymethylaminomethyl modification enzyme MnmG/GidA"/>
    <property type="match status" value="1"/>
</dbReference>
<dbReference type="HAMAP" id="MF_00129">
    <property type="entry name" value="MnmG_GidA"/>
    <property type="match status" value="1"/>
</dbReference>
<dbReference type="InterPro" id="IPR036188">
    <property type="entry name" value="FAD/NAD-bd_sf"/>
</dbReference>
<dbReference type="InterPro" id="IPR049312">
    <property type="entry name" value="GIDA_C_N"/>
</dbReference>
<dbReference type="InterPro" id="IPR004416">
    <property type="entry name" value="MnmG"/>
</dbReference>
<dbReference type="InterPro" id="IPR002218">
    <property type="entry name" value="MnmG-rel"/>
</dbReference>
<dbReference type="InterPro" id="IPR020595">
    <property type="entry name" value="MnmG-rel_CS"/>
</dbReference>
<dbReference type="InterPro" id="IPR026904">
    <property type="entry name" value="MnmG_C"/>
</dbReference>
<dbReference type="InterPro" id="IPR047001">
    <property type="entry name" value="MnmG_C_subdom"/>
</dbReference>
<dbReference type="InterPro" id="IPR044920">
    <property type="entry name" value="MnmG_C_subdom_sf"/>
</dbReference>
<dbReference type="InterPro" id="IPR040131">
    <property type="entry name" value="MnmG_N"/>
</dbReference>
<dbReference type="NCBIfam" id="TIGR00136">
    <property type="entry name" value="mnmG_gidA"/>
    <property type="match status" value="1"/>
</dbReference>
<dbReference type="PANTHER" id="PTHR11806">
    <property type="entry name" value="GLUCOSE INHIBITED DIVISION PROTEIN A"/>
    <property type="match status" value="1"/>
</dbReference>
<dbReference type="PANTHER" id="PTHR11806:SF0">
    <property type="entry name" value="PROTEIN MTO1 HOMOLOG, MITOCHONDRIAL"/>
    <property type="match status" value="1"/>
</dbReference>
<dbReference type="Pfam" id="PF01134">
    <property type="entry name" value="GIDA"/>
    <property type="match status" value="1"/>
</dbReference>
<dbReference type="Pfam" id="PF21680">
    <property type="entry name" value="GIDA_C_1st"/>
    <property type="match status" value="1"/>
</dbReference>
<dbReference type="Pfam" id="PF13932">
    <property type="entry name" value="SAM_GIDA_C"/>
    <property type="match status" value="1"/>
</dbReference>
<dbReference type="SMART" id="SM01228">
    <property type="entry name" value="GIDA_assoc_3"/>
    <property type="match status" value="1"/>
</dbReference>
<dbReference type="SUPFAM" id="SSF51905">
    <property type="entry name" value="FAD/NAD(P)-binding domain"/>
    <property type="match status" value="1"/>
</dbReference>
<dbReference type="PROSITE" id="PS01280">
    <property type="entry name" value="GIDA_1"/>
    <property type="match status" value="1"/>
</dbReference>
<dbReference type="PROSITE" id="PS01281">
    <property type="entry name" value="GIDA_2"/>
    <property type="match status" value="1"/>
</dbReference>
<name>MNMG_BORBR</name>
<comment type="function">
    <text evidence="1">NAD-binding protein involved in the addition of a carboxymethylaminomethyl (cmnm) group at the wobble position (U34) of certain tRNAs, forming tRNA-cmnm(5)s(2)U34.</text>
</comment>
<comment type="cofactor">
    <cofactor evidence="1">
        <name>FAD</name>
        <dbReference type="ChEBI" id="CHEBI:57692"/>
    </cofactor>
</comment>
<comment type="subunit">
    <text evidence="1">Homodimer. Heterotetramer of two MnmE and two MnmG subunits.</text>
</comment>
<comment type="subcellular location">
    <subcellularLocation>
        <location evidence="1">Cytoplasm</location>
    </subcellularLocation>
</comment>
<comment type="similarity">
    <text evidence="1">Belongs to the MnmG family.</text>
</comment>
<evidence type="ECO:0000255" key="1">
    <source>
        <dbReference type="HAMAP-Rule" id="MF_00129"/>
    </source>
</evidence>
<reference key="1">
    <citation type="journal article" date="2003" name="Nat. Genet.">
        <title>Comparative analysis of the genome sequences of Bordetella pertussis, Bordetella parapertussis and Bordetella bronchiseptica.</title>
        <authorList>
            <person name="Parkhill J."/>
            <person name="Sebaihia M."/>
            <person name="Preston A."/>
            <person name="Murphy L.D."/>
            <person name="Thomson N.R."/>
            <person name="Harris D.E."/>
            <person name="Holden M.T.G."/>
            <person name="Churcher C.M."/>
            <person name="Bentley S.D."/>
            <person name="Mungall K.L."/>
            <person name="Cerdeno-Tarraga A.-M."/>
            <person name="Temple L."/>
            <person name="James K.D."/>
            <person name="Harris B."/>
            <person name="Quail M.A."/>
            <person name="Achtman M."/>
            <person name="Atkin R."/>
            <person name="Baker S."/>
            <person name="Basham D."/>
            <person name="Bason N."/>
            <person name="Cherevach I."/>
            <person name="Chillingworth T."/>
            <person name="Collins M."/>
            <person name="Cronin A."/>
            <person name="Davis P."/>
            <person name="Doggett J."/>
            <person name="Feltwell T."/>
            <person name="Goble A."/>
            <person name="Hamlin N."/>
            <person name="Hauser H."/>
            <person name="Holroyd S."/>
            <person name="Jagels K."/>
            <person name="Leather S."/>
            <person name="Moule S."/>
            <person name="Norberczak H."/>
            <person name="O'Neil S."/>
            <person name="Ormond D."/>
            <person name="Price C."/>
            <person name="Rabbinowitsch E."/>
            <person name="Rutter S."/>
            <person name="Sanders M."/>
            <person name="Saunders D."/>
            <person name="Seeger K."/>
            <person name="Sharp S."/>
            <person name="Simmonds M."/>
            <person name="Skelton J."/>
            <person name="Squares R."/>
            <person name="Squares S."/>
            <person name="Stevens K."/>
            <person name="Unwin L."/>
            <person name="Whitehead S."/>
            <person name="Barrell B.G."/>
            <person name="Maskell D.J."/>
        </authorList>
    </citation>
    <scope>NUCLEOTIDE SEQUENCE [LARGE SCALE GENOMIC DNA]</scope>
    <source>
        <strain>ATCC BAA-588 / NCTC 13252 / RB50</strain>
    </source>
</reference>
<gene>
    <name evidence="1" type="primary">mnmG</name>
    <name evidence="1" type="synonym">gidA</name>
    <name type="ordered locus">BB0001</name>
</gene>
<proteinExistence type="inferred from homology"/>
<protein>
    <recommendedName>
        <fullName evidence="1">tRNA uridine 5-carboxymethylaminomethyl modification enzyme MnmG</fullName>
    </recommendedName>
    <alternativeName>
        <fullName evidence="1">Glucose-inhibited division protein A</fullName>
    </alternativeName>
</protein>
<organism>
    <name type="scientific">Bordetella bronchiseptica (strain ATCC BAA-588 / NCTC 13252 / RB50)</name>
    <name type="common">Alcaligenes bronchisepticus</name>
    <dbReference type="NCBI Taxonomy" id="257310"/>
    <lineage>
        <taxon>Bacteria</taxon>
        <taxon>Pseudomonadati</taxon>
        <taxon>Pseudomonadota</taxon>
        <taxon>Betaproteobacteria</taxon>
        <taxon>Burkholderiales</taxon>
        <taxon>Alcaligenaceae</taxon>
        <taxon>Bordetella</taxon>
    </lineage>
</organism>